<organism>
    <name type="scientific">Carboxydothermus hydrogenoformans (strain ATCC BAA-161 / DSM 6008 / Z-2901)</name>
    <dbReference type="NCBI Taxonomy" id="246194"/>
    <lineage>
        <taxon>Bacteria</taxon>
        <taxon>Bacillati</taxon>
        <taxon>Bacillota</taxon>
        <taxon>Clostridia</taxon>
        <taxon>Thermoanaerobacterales</taxon>
        <taxon>Thermoanaerobacteraceae</taxon>
        <taxon>Carboxydothermus</taxon>
    </lineage>
</organism>
<feature type="chain" id="PRO_0000249760" description="Glycine/sarcosine/betaine reductase complex component A">
    <location>
        <begin position="1"/>
        <end position="156"/>
    </location>
</feature>
<feature type="active site" evidence="1">
    <location>
        <position position="44"/>
    </location>
</feature>
<feature type="non-standard amino acid" description="Selenocysteine" evidence="2">
    <location>
        <position position="44"/>
    </location>
</feature>
<comment type="function">
    <text evidence="1">In the first step of glycine, betaine and sarcosine reductases, the substrate is bound to component PB via a Schiff base intermediate. Then the PB-activated substrate is nucleophilically attacked by the selenol anion of component PA to transform it to a carboxymethylated selenoether and the respective amine. By action of component PC, acetyl phosphate is formed, leaving component PA in its oxidized state. Finally component PA becomes reduced by the thioredoxin system to start a new catalytic cycle of reductive deamination (By similarity).</text>
</comment>
<comment type="catalytic activity">
    <reaction>
        <text>acetyl phosphate + [thioredoxin]-disulfide + NH4(+) + H2O = [thioredoxin]-dithiol + glycine + phosphate + H(+)</text>
        <dbReference type="Rhea" id="RHEA:12232"/>
        <dbReference type="Rhea" id="RHEA-COMP:10698"/>
        <dbReference type="Rhea" id="RHEA-COMP:10700"/>
        <dbReference type="ChEBI" id="CHEBI:15377"/>
        <dbReference type="ChEBI" id="CHEBI:15378"/>
        <dbReference type="ChEBI" id="CHEBI:22191"/>
        <dbReference type="ChEBI" id="CHEBI:28938"/>
        <dbReference type="ChEBI" id="CHEBI:29950"/>
        <dbReference type="ChEBI" id="CHEBI:43474"/>
        <dbReference type="ChEBI" id="CHEBI:50058"/>
        <dbReference type="ChEBI" id="CHEBI:57305"/>
        <dbReference type="EC" id="1.21.4.2"/>
    </reaction>
</comment>
<comment type="catalytic activity">
    <reaction>
        <text>acetyl phosphate + methylamine + [thioredoxin]-disulfide + H2O = sarcosine + [thioredoxin]-dithiol + phosphate + H(+)</text>
        <dbReference type="Rhea" id="RHEA:12825"/>
        <dbReference type="Rhea" id="RHEA-COMP:10698"/>
        <dbReference type="Rhea" id="RHEA-COMP:10700"/>
        <dbReference type="ChEBI" id="CHEBI:15377"/>
        <dbReference type="ChEBI" id="CHEBI:15378"/>
        <dbReference type="ChEBI" id="CHEBI:22191"/>
        <dbReference type="ChEBI" id="CHEBI:29950"/>
        <dbReference type="ChEBI" id="CHEBI:43474"/>
        <dbReference type="ChEBI" id="CHEBI:50058"/>
        <dbReference type="ChEBI" id="CHEBI:57433"/>
        <dbReference type="ChEBI" id="CHEBI:59338"/>
        <dbReference type="EC" id="1.21.4.3"/>
    </reaction>
</comment>
<comment type="catalytic activity">
    <reaction>
        <text>acetyl phosphate + trimethylamine + [thioredoxin]-disulfide + H2O = glycine betaine + [thioredoxin]-dithiol + phosphate + H(+)</text>
        <dbReference type="Rhea" id="RHEA:11848"/>
        <dbReference type="Rhea" id="RHEA-COMP:10698"/>
        <dbReference type="Rhea" id="RHEA-COMP:10700"/>
        <dbReference type="ChEBI" id="CHEBI:15377"/>
        <dbReference type="ChEBI" id="CHEBI:15378"/>
        <dbReference type="ChEBI" id="CHEBI:17750"/>
        <dbReference type="ChEBI" id="CHEBI:22191"/>
        <dbReference type="ChEBI" id="CHEBI:29950"/>
        <dbReference type="ChEBI" id="CHEBI:43474"/>
        <dbReference type="ChEBI" id="CHEBI:50058"/>
        <dbReference type="ChEBI" id="CHEBI:58389"/>
        <dbReference type="EC" id="1.21.4.4"/>
    </reaction>
</comment>
<comment type="subunit">
    <text evidence="1">Monomer. Component of the glycine, sarcosine and betaine reductase complexes, together with components B and C (By similarity).</text>
</comment>
<comment type="similarity">
    <text evidence="2">Belongs to the GrdA family.</text>
</comment>
<reference key="1">
    <citation type="journal article" date="2005" name="PLoS Genet.">
        <title>Life in hot carbon monoxide: the complete genome sequence of Carboxydothermus hydrogenoformans Z-2901.</title>
        <authorList>
            <person name="Wu M."/>
            <person name="Ren Q."/>
            <person name="Durkin A.S."/>
            <person name="Daugherty S.C."/>
            <person name="Brinkac L.M."/>
            <person name="Dodson R.J."/>
            <person name="Madupu R."/>
            <person name="Sullivan S.A."/>
            <person name="Kolonay J.F."/>
            <person name="Nelson W.C."/>
            <person name="Tallon L.J."/>
            <person name="Jones K.M."/>
            <person name="Ulrich L.E."/>
            <person name="Gonzalez J.M."/>
            <person name="Zhulin I.B."/>
            <person name="Robb F.T."/>
            <person name="Eisen J.A."/>
        </authorList>
    </citation>
    <scope>NUCLEOTIDE SEQUENCE [LARGE SCALE GENOMIC DNA]</scope>
    <source>
        <strain>ATCC BAA-161 / DSM 6008 / Z-2901</strain>
    </source>
</reference>
<evidence type="ECO:0000250" key="1"/>
<evidence type="ECO:0000305" key="2"/>
<gene>
    <name type="primary">grdA</name>
    <name type="ordered locus">CHY_2392</name>
</gene>
<dbReference type="EC" id="1.21.4.2"/>
<dbReference type="EC" id="1.21.4.3"/>
<dbReference type="EC" id="1.21.4.4"/>
<dbReference type="EMBL" id="CP000141">
    <property type="protein sequence ID" value="ABB15572.1"/>
    <property type="molecule type" value="Genomic_DNA"/>
</dbReference>
<dbReference type="STRING" id="246194.CHY_2392"/>
<dbReference type="KEGG" id="chy:CHY_2392"/>
<dbReference type="eggNOG" id="ENOG50313TT">
    <property type="taxonomic scope" value="Bacteria"/>
</dbReference>
<dbReference type="HOGENOM" id="CLU_142275_0_0_9"/>
<dbReference type="InParanoid" id="Q3A9J5"/>
<dbReference type="OrthoDB" id="9787487at2"/>
<dbReference type="Proteomes" id="UP000002706">
    <property type="component" value="Chromosome"/>
</dbReference>
<dbReference type="GO" id="GO:0030700">
    <property type="term" value="C:glycine reductase complex"/>
    <property type="evidence" value="ECO:0007669"/>
    <property type="project" value="InterPro"/>
</dbReference>
<dbReference type="GO" id="GO:0033795">
    <property type="term" value="F:betaine reductase activity"/>
    <property type="evidence" value="ECO:0007669"/>
    <property type="project" value="UniProtKB-EC"/>
</dbReference>
<dbReference type="GO" id="GO:0030699">
    <property type="term" value="F:glycine reductase activity"/>
    <property type="evidence" value="ECO:0007669"/>
    <property type="project" value="UniProtKB-UniRule"/>
</dbReference>
<dbReference type="GO" id="GO:0033794">
    <property type="term" value="F:sarcosine reductase activity"/>
    <property type="evidence" value="ECO:0007669"/>
    <property type="project" value="UniProtKB-EC"/>
</dbReference>
<dbReference type="HAMAP" id="MF_00826">
    <property type="entry name" value="GRDA"/>
    <property type="match status" value="1"/>
</dbReference>
<dbReference type="InterPro" id="IPR006812">
    <property type="entry name" value="GRDA"/>
</dbReference>
<dbReference type="NCBIfam" id="NF040748">
    <property type="entry name" value="reduct_selen_A"/>
    <property type="match status" value="1"/>
</dbReference>
<dbReference type="Pfam" id="PF04723">
    <property type="entry name" value="GRDA"/>
    <property type="match status" value="1"/>
</dbReference>
<dbReference type="PIRSF" id="PIRSF000181">
    <property type="entry name" value="Grc_selenoprot_A"/>
    <property type="match status" value="1"/>
</dbReference>
<accession>Q3A9J5</accession>
<sequence length="156" mass="16198">MAILAGKKVIAVGDRDGVPGPAIAECAKSAGAEVVFATTECFVUTAAGTMDLQNQARIKELAEELGGENIVVLLGAAEPDTASLAAETVTLGDPTFAGPLAGVSLGLKVYHILEPEIKAEIDPAVYEEQAAMMEMVLDVDALAAEVSKMRKEGSKY</sequence>
<keyword id="KW-0560">Oxidoreductase</keyword>
<keyword id="KW-1185">Reference proteome</keyword>
<keyword id="KW-0712">Selenocysteine</keyword>
<name>GRDA_CARHZ</name>
<proteinExistence type="inferred from homology"/>
<protein>
    <recommendedName>
        <fullName>Glycine/sarcosine/betaine reductase complex component A</fullName>
        <ecNumber>1.21.4.2</ecNumber>
        <ecNumber>1.21.4.3</ecNumber>
        <ecNumber>1.21.4.4</ecNumber>
    </recommendedName>
    <alternativeName>
        <fullName>Selenoprotein PA</fullName>
    </alternativeName>
    <alternativeName>
        <fullName>Thioredoxin reductase complex selenoprotein A</fullName>
    </alternativeName>
</protein>